<evidence type="ECO:0000255" key="1">
    <source>
        <dbReference type="HAMAP-Rule" id="MF_01558"/>
    </source>
</evidence>
<evidence type="ECO:0000255" key="2">
    <source>
        <dbReference type="PROSITE-ProRule" id="PRU01083"/>
    </source>
</evidence>
<keyword id="KW-0378">Hydrolase</keyword>
<keyword id="KW-0479">Metal-binding</keyword>
<keyword id="KW-0862">Zinc</keyword>
<gene>
    <name evidence="1" type="primary">cdd</name>
    <name type="ordered locus">PC1_1495</name>
</gene>
<feature type="chain" id="PRO_1000215505" description="Cytidine deaminase">
    <location>
        <begin position="1"/>
        <end position="296"/>
    </location>
</feature>
<feature type="domain" description="CMP/dCMP-type deaminase 1" evidence="2">
    <location>
        <begin position="48"/>
        <end position="168"/>
    </location>
</feature>
<feature type="domain" description="CMP/dCMP-type deaminase 2" evidence="2">
    <location>
        <begin position="187"/>
        <end position="296"/>
    </location>
</feature>
<feature type="active site" description="Proton donor" evidence="1">
    <location>
        <position position="104"/>
    </location>
</feature>
<feature type="binding site" evidence="1">
    <location>
        <begin position="89"/>
        <end position="91"/>
    </location>
    <ligand>
        <name>substrate</name>
    </ligand>
</feature>
<feature type="binding site" evidence="1">
    <location>
        <position position="102"/>
    </location>
    <ligand>
        <name>Zn(2+)</name>
        <dbReference type="ChEBI" id="CHEBI:29105"/>
        <note>catalytic</note>
    </ligand>
</feature>
<feature type="binding site" evidence="1">
    <location>
        <position position="129"/>
    </location>
    <ligand>
        <name>Zn(2+)</name>
        <dbReference type="ChEBI" id="CHEBI:29105"/>
        <note>catalytic</note>
    </ligand>
</feature>
<feature type="binding site" evidence="1">
    <location>
        <position position="132"/>
    </location>
    <ligand>
        <name>Zn(2+)</name>
        <dbReference type="ChEBI" id="CHEBI:29105"/>
        <note>catalytic</note>
    </ligand>
</feature>
<accession>C6DDS7</accession>
<name>CDD_PECCP</name>
<protein>
    <recommendedName>
        <fullName evidence="1">Cytidine deaminase</fullName>
        <ecNumber evidence="1">3.5.4.5</ecNumber>
    </recommendedName>
    <alternativeName>
        <fullName evidence="1">Cytidine aminohydrolase</fullName>
        <shortName evidence="1">CDA</shortName>
    </alternativeName>
</protein>
<sequence length="296" mass="32120">MHPRFENAFRQLPASLQAALRPLIDKPDFAAMLTADDVNAVCEASQLDADALAFALLPLAAACAQAPISNFQVGAIAQGLSGNFYFGANMEFSAVQLQQTVHAEQSAVSHAWMRNERGLRAVTVNYTPCGHCRQFMNELRDAASLRIQLPGRQPATLSHYLPDSFGPVDLQIDTLLMDDINHGATLQNMNALARQALDAANRSHAPYSKAISGIVLETSSGNTYTGRYAENAAFNPSLPPLQTALNLMNLAGEDLSTVKHAVVVERRNAVVSHWAISQIMLAELGCTDVEHHFIEE</sequence>
<reference key="1">
    <citation type="submission" date="2009-07" db="EMBL/GenBank/DDBJ databases">
        <title>Complete sequence of Pectobacterium carotovorum subsp. carotovorum PC1.</title>
        <authorList>
            <consortium name="US DOE Joint Genome Institute"/>
            <person name="Lucas S."/>
            <person name="Copeland A."/>
            <person name="Lapidus A."/>
            <person name="Glavina del Rio T."/>
            <person name="Tice H."/>
            <person name="Bruce D."/>
            <person name="Goodwin L."/>
            <person name="Pitluck S."/>
            <person name="Munk A.C."/>
            <person name="Brettin T."/>
            <person name="Detter J.C."/>
            <person name="Han C."/>
            <person name="Tapia R."/>
            <person name="Larimer F."/>
            <person name="Land M."/>
            <person name="Hauser L."/>
            <person name="Kyrpides N."/>
            <person name="Mikhailova N."/>
            <person name="Balakrishnan V."/>
            <person name="Glasner J."/>
            <person name="Perna N.T."/>
        </authorList>
    </citation>
    <scope>NUCLEOTIDE SEQUENCE [LARGE SCALE GENOMIC DNA]</scope>
    <source>
        <strain>PC1</strain>
    </source>
</reference>
<proteinExistence type="inferred from homology"/>
<comment type="function">
    <text evidence="1">This enzyme scavenges exogenous and endogenous cytidine and 2'-deoxycytidine for UMP synthesis.</text>
</comment>
<comment type="catalytic activity">
    <reaction evidence="1">
        <text>cytidine + H2O + H(+) = uridine + NH4(+)</text>
        <dbReference type="Rhea" id="RHEA:16069"/>
        <dbReference type="ChEBI" id="CHEBI:15377"/>
        <dbReference type="ChEBI" id="CHEBI:15378"/>
        <dbReference type="ChEBI" id="CHEBI:16704"/>
        <dbReference type="ChEBI" id="CHEBI:17562"/>
        <dbReference type="ChEBI" id="CHEBI:28938"/>
        <dbReference type="EC" id="3.5.4.5"/>
    </reaction>
</comment>
<comment type="catalytic activity">
    <reaction evidence="1">
        <text>2'-deoxycytidine + H2O + H(+) = 2'-deoxyuridine + NH4(+)</text>
        <dbReference type="Rhea" id="RHEA:13433"/>
        <dbReference type="ChEBI" id="CHEBI:15377"/>
        <dbReference type="ChEBI" id="CHEBI:15378"/>
        <dbReference type="ChEBI" id="CHEBI:15698"/>
        <dbReference type="ChEBI" id="CHEBI:16450"/>
        <dbReference type="ChEBI" id="CHEBI:28938"/>
        <dbReference type="EC" id="3.5.4.5"/>
    </reaction>
</comment>
<comment type="cofactor">
    <cofactor evidence="1">
        <name>Zn(2+)</name>
        <dbReference type="ChEBI" id="CHEBI:29105"/>
    </cofactor>
    <text evidence="1">Binds 1 zinc ion.</text>
</comment>
<comment type="subunit">
    <text evidence="1">Homodimer.</text>
</comment>
<comment type="similarity">
    <text evidence="1">Belongs to the cytidine and deoxycytidylate deaminase family.</text>
</comment>
<organism>
    <name type="scientific">Pectobacterium carotovorum subsp. carotovorum (strain PC1)</name>
    <dbReference type="NCBI Taxonomy" id="561230"/>
    <lineage>
        <taxon>Bacteria</taxon>
        <taxon>Pseudomonadati</taxon>
        <taxon>Pseudomonadota</taxon>
        <taxon>Gammaproteobacteria</taxon>
        <taxon>Enterobacterales</taxon>
        <taxon>Pectobacteriaceae</taxon>
        <taxon>Pectobacterium</taxon>
    </lineage>
</organism>
<dbReference type="EC" id="3.5.4.5" evidence="1"/>
<dbReference type="EMBL" id="CP001657">
    <property type="protein sequence ID" value="ACT12539.1"/>
    <property type="molecule type" value="Genomic_DNA"/>
</dbReference>
<dbReference type="RefSeq" id="WP_015839765.1">
    <property type="nucleotide sequence ID" value="NC_012917.1"/>
</dbReference>
<dbReference type="SMR" id="C6DDS7"/>
<dbReference type="STRING" id="561230.PC1_1495"/>
<dbReference type="KEGG" id="pct:PC1_1495"/>
<dbReference type="eggNOG" id="COG0295">
    <property type="taxonomic scope" value="Bacteria"/>
</dbReference>
<dbReference type="HOGENOM" id="CLU_052424_0_0_6"/>
<dbReference type="OrthoDB" id="9795347at2"/>
<dbReference type="Proteomes" id="UP000002736">
    <property type="component" value="Chromosome"/>
</dbReference>
<dbReference type="GO" id="GO:0005829">
    <property type="term" value="C:cytosol"/>
    <property type="evidence" value="ECO:0007669"/>
    <property type="project" value="TreeGrafter"/>
</dbReference>
<dbReference type="GO" id="GO:0004126">
    <property type="term" value="F:cytidine deaminase activity"/>
    <property type="evidence" value="ECO:0007669"/>
    <property type="project" value="UniProtKB-UniRule"/>
</dbReference>
<dbReference type="GO" id="GO:0042802">
    <property type="term" value="F:identical protein binding"/>
    <property type="evidence" value="ECO:0007669"/>
    <property type="project" value="UniProtKB-ARBA"/>
</dbReference>
<dbReference type="GO" id="GO:0008270">
    <property type="term" value="F:zinc ion binding"/>
    <property type="evidence" value="ECO:0007669"/>
    <property type="project" value="UniProtKB-UniRule"/>
</dbReference>
<dbReference type="GO" id="GO:0009972">
    <property type="term" value="P:cytidine deamination"/>
    <property type="evidence" value="ECO:0007669"/>
    <property type="project" value="InterPro"/>
</dbReference>
<dbReference type="CDD" id="cd01283">
    <property type="entry name" value="cytidine_deaminase"/>
    <property type="match status" value="2"/>
</dbReference>
<dbReference type="FunFam" id="3.40.140.10:FF:000007">
    <property type="entry name" value="Cytidine deaminase"/>
    <property type="match status" value="1"/>
</dbReference>
<dbReference type="Gene3D" id="3.40.140.10">
    <property type="entry name" value="Cytidine Deaminase, domain 2"/>
    <property type="match status" value="2"/>
</dbReference>
<dbReference type="HAMAP" id="MF_01558">
    <property type="entry name" value="Cyt_deam"/>
    <property type="match status" value="1"/>
</dbReference>
<dbReference type="InterPro" id="IPR016192">
    <property type="entry name" value="APOBEC/CMP_deaminase_Zn-bd"/>
</dbReference>
<dbReference type="InterPro" id="IPR002125">
    <property type="entry name" value="CMP_dCMP_dom"/>
</dbReference>
<dbReference type="InterPro" id="IPR013171">
    <property type="entry name" value="Cyd/dCyd_deaminase_Zn-bd"/>
</dbReference>
<dbReference type="InterPro" id="IPR050202">
    <property type="entry name" value="Cyt/Deoxycyt_deaminase"/>
</dbReference>
<dbReference type="InterPro" id="IPR006263">
    <property type="entry name" value="Cyt_deam_dimer"/>
</dbReference>
<dbReference type="InterPro" id="IPR016193">
    <property type="entry name" value="Cytidine_deaminase-like"/>
</dbReference>
<dbReference type="InterPro" id="IPR020797">
    <property type="entry name" value="Cytidine_deaminase_bacteria"/>
</dbReference>
<dbReference type="NCBIfam" id="TIGR01355">
    <property type="entry name" value="cyt_deam_dimer"/>
    <property type="match status" value="1"/>
</dbReference>
<dbReference type="NCBIfam" id="NF006537">
    <property type="entry name" value="PRK09027.1"/>
    <property type="match status" value="1"/>
</dbReference>
<dbReference type="PANTHER" id="PTHR11644">
    <property type="entry name" value="CYTIDINE DEAMINASE"/>
    <property type="match status" value="1"/>
</dbReference>
<dbReference type="PANTHER" id="PTHR11644:SF2">
    <property type="entry name" value="CYTIDINE DEAMINASE"/>
    <property type="match status" value="1"/>
</dbReference>
<dbReference type="Pfam" id="PF00383">
    <property type="entry name" value="dCMP_cyt_deam_1"/>
    <property type="match status" value="1"/>
</dbReference>
<dbReference type="Pfam" id="PF08211">
    <property type="entry name" value="dCMP_cyt_deam_2"/>
    <property type="match status" value="1"/>
</dbReference>
<dbReference type="PIRSF" id="PIRSF006334">
    <property type="entry name" value="Cdd_plus_pseudo"/>
    <property type="match status" value="1"/>
</dbReference>
<dbReference type="SUPFAM" id="SSF53927">
    <property type="entry name" value="Cytidine deaminase-like"/>
    <property type="match status" value="2"/>
</dbReference>
<dbReference type="PROSITE" id="PS00903">
    <property type="entry name" value="CYT_DCMP_DEAMINASES_1"/>
    <property type="match status" value="1"/>
</dbReference>
<dbReference type="PROSITE" id="PS51747">
    <property type="entry name" value="CYT_DCMP_DEAMINASES_2"/>
    <property type="match status" value="2"/>
</dbReference>